<proteinExistence type="inferred from homology"/>
<name>RR4_LOTJA</name>
<reference key="1">
    <citation type="journal article" date="2000" name="DNA Res.">
        <title>Complete structure of the chloroplast genome of a legume, Lotus japonicus.</title>
        <authorList>
            <person name="Kato T."/>
            <person name="Kaneko T."/>
            <person name="Sato S."/>
            <person name="Nakamura Y."/>
            <person name="Tabata S."/>
        </authorList>
    </citation>
    <scope>NUCLEOTIDE SEQUENCE [LARGE SCALE GENOMIC DNA]</scope>
    <source>
        <strain>cv. Miyakojima MG-20</strain>
    </source>
</reference>
<accession>Q9BBT5</accession>
<gene>
    <name type="primary">rps4</name>
</gene>
<sequence length="201" mass="23323">MSRYRGPRFKKIRRLGALPGLTSKRPTVGSELRNQSRSTKKSQYRIRLEEKQKLRFHYGLTERQLLKYVRIAGKAKGSTGQVLLQLLEMRLDNILFRLGMASTIPQARQLVNHRHVFVNGHIVDIPSYRCKPQDIITAKDNKKSKTLIQNSLESAPREELPTHLTLQPFQYKGLVNQIIDSKWVGLKINELLVVEYYSRQT</sequence>
<comment type="function">
    <text evidence="1">One of the primary rRNA binding proteins, it binds directly to 16S rRNA where it nucleates assembly of the body of the 30S subunit.</text>
</comment>
<comment type="function">
    <text evidence="1">With S5 and S12 plays an important role in translational accuracy.</text>
</comment>
<comment type="subunit">
    <text evidence="1">Part of the 30S ribosomal subunit. Contacts protein S5. The interaction surface between S4 and S5 is involved in control of translational fidelity (By similarity).</text>
</comment>
<comment type="subcellular location">
    <subcellularLocation>
        <location>Plastid</location>
        <location>Chloroplast</location>
    </subcellularLocation>
</comment>
<comment type="similarity">
    <text evidence="3">Belongs to the universal ribosomal protein uS4 family.</text>
</comment>
<feature type="chain" id="PRO_0000132622" description="Small ribosomal subunit protein uS4c">
    <location>
        <begin position="1"/>
        <end position="201"/>
    </location>
</feature>
<feature type="domain" description="S4 RNA-binding">
    <location>
        <begin position="89"/>
        <end position="150"/>
    </location>
</feature>
<feature type="region of interest" description="Disordered" evidence="2">
    <location>
        <begin position="20"/>
        <end position="44"/>
    </location>
</feature>
<organism>
    <name type="scientific">Lotus japonicus</name>
    <name type="common">Lotus corniculatus var. japonicus</name>
    <dbReference type="NCBI Taxonomy" id="34305"/>
    <lineage>
        <taxon>Eukaryota</taxon>
        <taxon>Viridiplantae</taxon>
        <taxon>Streptophyta</taxon>
        <taxon>Embryophyta</taxon>
        <taxon>Tracheophyta</taxon>
        <taxon>Spermatophyta</taxon>
        <taxon>Magnoliopsida</taxon>
        <taxon>eudicotyledons</taxon>
        <taxon>Gunneridae</taxon>
        <taxon>Pentapetalae</taxon>
        <taxon>rosids</taxon>
        <taxon>fabids</taxon>
        <taxon>Fabales</taxon>
        <taxon>Fabaceae</taxon>
        <taxon>Papilionoideae</taxon>
        <taxon>50 kb inversion clade</taxon>
        <taxon>NPAAA clade</taxon>
        <taxon>Hologalegina</taxon>
        <taxon>robinioid clade</taxon>
        <taxon>Loteae</taxon>
        <taxon>Lotus</taxon>
    </lineage>
</organism>
<protein>
    <recommendedName>
        <fullName evidence="3">Small ribosomal subunit protein uS4c</fullName>
    </recommendedName>
    <alternativeName>
        <fullName>30S ribosomal protein S4, chloroplastic</fullName>
    </alternativeName>
</protein>
<evidence type="ECO:0000250" key="1"/>
<evidence type="ECO:0000256" key="2">
    <source>
        <dbReference type="SAM" id="MobiDB-lite"/>
    </source>
</evidence>
<evidence type="ECO:0000305" key="3"/>
<dbReference type="EMBL" id="AP002983">
    <property type="protein sequence ID" value="BAB33184.1"/>
    <property type="molecule type" value="Genomic_DNA"/>
</dbReference>
<dbReference type="RefSeq" id="NP_084786.1">
    <property type="nucleotide sequence ID" value="NC_002694.1"/>
</dbReference>
<dbReference type="SMR" id="Q9BBT5"/>
<dbReference type="GeneID" id="802936"/>
<dbReference type="OMA" id="QLVVELY"/>
<dbReference type="GO" id="GO:0009507">
    <property type="term" value="C:chloroplast"/>
    <property type="evidence" value="ECO:0007669"/>
    <property type="project" value="UniProtKB-SubCell"/>
</dbReference>
<dbReference type="GO" id="GO:0015935">
    <property type="term" value="C:small ribosomal subunit"/>
    <property type="evidence" value="ECO:0007669"/>
    <property type="project" value="InterPro"/>
</dbReference>
<dbReference type="GO" id="GO:0019843">
    <property type="term" value="F:rRNA binding"/>
    <property type="evidence" value="ECO:0007669"/>
    <property type="project" value="UniProtKB-UniRule"/>
</dbReference>
<dbReference type="GO" id="GO:0003735">
    <property type="term" value="F:structural constituent of ribosome"/>
    <property type="evidence" value="ECO:0007669"/>
    <property type="project" value="InterPro"/>
</dbReference>
<dbReference type="GO" id="GO:0042274">
    <property type="term" value="P:ribosomal small subunit biogenesis"/>
    <property type="evidence" value="ECO:0007669"/>
    <property type="project" value="TreeGrafter"/>
</dbReference>
<dbReference type="GO" id="GO:0006412">
    <property type="term" value="P:translation"/>
    <property type="evidence" value="ECO:0007669"/>
    <property type="project" value="UniProtKB-UniRule"/>
</dbReference>
<dbReference type="CDD" id="cd00165">
    <property type="entry name" value="S4"/>
    <property type="match status" value="1"/>
</dbReference>
<dbReference type="FunFam" id="1.10.1050.10:FF:000002">
    <property type="entry name" value="30S ribosomal protein S4, chloroplastic"/>
    <property type="match status" value="1"/>
</dbReference>
<dbReference type="FunFam" id="3.10.290.10:FF:000081">
    <property type="entry name" value="30S ribosomal protein S4, chloroplastic"/>
    <property type="match status" value="1"/>
</dbReference>
<dbReference type="Gene3D" id="1.10.1050.10">
    <property type="entry name" value="Ribosomal Protein S4 Delta 41, Chain A, domain 1"/>
    <property type="match status" value="1"/>
</dbReference>
<dbReference type="Gene3D" id="3.10.290.10">
    <property type="entry name" value="RNA-binding S4 domain"/>
    <property type="match status" value="1"/>
</dbReference>
<dbReference type="HAMAP" id="MF_01306_B">
    <property type="entry name" value="Ribosomal_uS4_B"/>
    <property type="match status" value="1"/>
</dbReference>
<dbReference type="InterPro" id="IPR022801">
    <property type="entry name" value="Ribosomal_uS4"/>
</dbReference>
<dbReference type="InterPro" id="IPR005709">
    <property type="entry name" value="Ribosomal_uS4_bac-type"/>
</dbReference>
<dbReference type="InterPro" id="IPR018079">
    <property type="entry name" value="Ribosomal_uS4_CS"/>
</dbReference>
<dbReference type="InterPro" id="IPR001912">
    <property type="entry name" value="Ribosomal_uS4_N"/>
</dbReference>
<dbReference type="InterPro" id="IPR002942">
    <property type="entry name" value="S4_RNA-bd"/>
</dbReference>
<dbReference type="InterPro" id="IPR036986">
    <property type="entry name" value="S4_RNA-bd_sf"/>
</dbReference>
<dbReference type="NCBIfam" id="NF003717">
    <property type="entry name" value="PRK05327.1"/>
    <property type="match status" value="1"/>
</dbReference>
<dbReference type="NCBIfam" id="TIGR01017">
    <property type="entry name" value="rpsD_bact"/>
    <property type="match status" value="1"/>
</dbReference>
<dbReference type="PANTHER" id="PTHR11831">
    <property type="entry name" value="30S 40S RIBOSOMAL PROTEIN"/>
    <property type="match status" value="1"/>
</dbReference>
<dbReference type="PANTHER" id="PTHR11831:SF4">
    <property type="entry name" value="SMALL RIBOSOMAL SUBUNIT PROTEIN US4M"/>
    <property type="match status" value="1"/>
</dbReference>
<dbReference type="Pfam" id="PF00163">
    <property type="entry name" value="Ribosomal_S4"/>
    <property type="match status" value="1"/>
</dbReference>
<dbReference type="Pfam" id="PF01479">
    <property type="entry name" value="S4"/>
    <property type="match status" value="1"/>
</dbReference>
<dbReference type="SMART" id="SM01390">
    <property type="entry name" value="Ribosomal_S4"/>
    <property type="match status" value="1"/>
</dbReference>
<dbReference type="SMART" id="SM00363">
    <property type="entry name" value="S4"/>
    <property type="match status" value="1"/>
</dbReference>
<dbReference type="SUPFAM" id="SSF55174">
    <property type="entry name" value="Alpha-L RNA-binding motif"/>
    <property type="match status" value="1"/>
</dbReference>
<dbReference type="PROSITE" id="PS00632">
    <property type="entry name" value="RIBOSOMAL_S4"/>
    <property type="match status" value="1"/>
</dbReference>
<dbReference type="PROSITE" id="PS50889">
    <property type="entry name" value="S4"/>
    <property type="match status" value="1"/>
</dbReference>
<geneLocation type="chloroplast"/>
<keyword id="KW-0150">Chloroplast</keyword>
<keyword id="KW-0934">Plastid</keyword>
<keyword id="KW-0687">Ribonucleoprotein</keyword>
<keyword id="KW-0689">Ribosomal protein</keyword>
<keyword id="KW-0694">RNA-binding</keyword>
<keyword id="KW-0699">rRNA-binding</keyword>